<organism>
    <name type="scientific">Arabidopsis thaliana</name>
    <name type="common">Mouse-ear cress</name>
    <dbReference type="NCBI Taxonomy" id="3702"/>
    <lineage>
        <taxon>Eukaryota</taxon>
        <taxon>Viridiplantae</taxon>
        <taxon>Streptophyta</taxon>
        <taxon>Embryophyta</taxon>
        <taxon>Tracheophyta</taxon>
        <taxon>Spermatophyta</taxon>
        <taxon>Magnoliopsida</taxon>
        <taxon>eudicotyledons</taxon>
        <taxon>Gunneridae</taxon>
        <taxon>Pentapetalae</taxon>
        <taxon>rosids</taxon>
        <taxon>malvids</taxon>
        <taxon>Brassicales</taxon>
        <taxon>Brassicaceae</taxon>
        <taxon>Camelineae</taxon>
        <taxon>Arabidopsis</taxon>
    </lineage>
</organism>
<keyword id="KW-1185">Reference proteome</keyword>
<keyword id="KW-0687">Ribonucleoprotein</keyword>
<keyword id="KW-0689">Ribosomal protein</keyword>
<gene>
    <name type="primary">RPS28A</name>
    <name type="ordered locus">At3g10090</name>
    <name type="ORF">T22K18.8</name>
</gene>
<gene>
    <name type="primary">RPS28B</name>
    <name type="ordered locus">At5g03850</name>
    <name type="ORF">F8F6_60</name>
    <name type="ORF">MED24.15</name>
</gene>
<accession>Q9SR73</accession>
<sequence>MDSQIKHAVVVKVMGRTGSRGQVTQVRVKFTDSDRYIMRNVKGPVREGDILTLLESEREARRLR</sequence>
<comment type="similarity">
    <text evidence="2">Belongs to the eukaryotic ribosomal protein eS28 family.</text>
</comment>
<reference key="1">
    <citation type="journal article" date="2000" name="Nature">
        <title>Sequence and analysis of chromosome 3 of the plant Arabidopsis thaliana.</title>
        <authorList>
            <person name="Salanoubat M."/>
            <person name="Lemcke K."/>
            <person name="Rieger M."/>
            <person name="Ansorge W."/>
            <person name="Unseld M."/>
            <person name="Fartmann B."/>
            <person name="Valle G."/>
            <person name="Bloecker H."/>
            <person name="Perez-Alonso M."/>
            <person name="Obermaier B."/>
            <person name="Delseny M."/>
            <person name="Boutry M."/>
            <person name="Grivell L.A."/>
            <person name="Mache R."/>
            <person name="Puigdomenech P."/>
            <person name="De Simone V."/>
            <person name="Choisne N."/>
            <person name="Artiguenave F."/>
            <person name="Robert C."/>
            <person name="Brottier P."/>
            <person name="Wincker P."/>
            <person name="Cattolico L."/>
            <person name="Weissenbach J."/>
            <person name="Saurin W."/>
            <person name="Quetier F."/>
            <person name="Schaefer M."/>
            <person name="Mueller-Auer S."/>
            <person name="Gabel C."/>
            <person name="Fuchs M."/>
            <person name="Benes V."/>
            <person name="Wurmbach E."/>
            <person name="Drzonek H."/>
            <person name="Erfle H."/>
            <person name="Jordan N."/>
            <person name="Bangert S."/>
            <person name="Wiedelmann R."/>
            <person name="Kranz H."/>
            <person name="Voss H."/>
            <person name="Holland R."/>
            <person name="Brandt P."/>
            <person name="Nyakatura G."/>
            <person name="Vezzi A."/>
            <person name="D'Angelo M."/>
            <person name="Pallavicini A."/>
            <person name="Toppo S."/>
            <person name="Simionati B."/>
            <person name="Conrad A."/>
            <person name="Hornischer K."/>
            <person name="Kauer G."/>
            <person name="Loehnert T.-H."/>
            <person name="Nordsiek G."/>
            <person name="Reichelt J."/>
            <person name="Scharfe M."/>
            <person name="Schoen O."/>
            <person name="Bargues M."/>
            <person name="Terol J."/>
            <person name="Climent J."/>
            <person name="Navarro P."/>
            <person name="Collado C."/>
            <person name="Perez-Perez A."/>
            <person name="Ottenwaelder B."/>
            <person name="Duchemin D."/>
            <person name="Cooke R."/>
            <person name="Laudie M."/>
            <person name="Berger-Llauro C."/>
            <person name="Purnelle B."/>
            <person name="Masuy D."/>
            <person name="de Haan M."/>
            <person name="Maarse A.C."/>
            <person name="Alcaraz J.-P."/>
            <person name="Cottet A."/>
            <person name="Casacuberta E."/>
            <person name="Monfort A."/>
            <person name="Argiriou A."/>
            <person name="Flores M."/>
            <person name="Liguori R."/>
            <person name="Vitale D."/>
            <person name="Mannhaupt G."/>
            <person name="Haase D."/>
            <person name="Schoof H."/>
            <person name="Rudd S."/>
            <person name="Zaccaria P."/>
            <person name="Mewes H.-W."/>
            <person name="Mayer K.F.X."/>
            <person name="Kaul S."/>
            <person name="Town C.D."/>
            <person name="Koo H.L."/>
            <person name="Tallon L.J."/>
            <person name="Jenkins J."/>
            <person name="Rooney T."/>
            <person name="Rizzo M."/>
            <person name="Walts A."/>
            <person name="Utterback T."/>
            <person name="Fujii C.Y."/>
            <person name="Shea T.P."/>
            <person name="Creasy T.H."/>
            <person name="Haas B."/>
            <person name="Maiti R."/>
            <person name="Wu D."/>
            <person name="Peterson J."/>
            <person name="Van Aken S."/>
            <person name="Pai G."/>
            <person name="Militscher J."/>
            <person name="Sellers P."/>
            <person name="Gill J.E."/>
            <person name="Feldblyum T.V."/>
            <person name="Preuss D."/>
            <person name="Lin X."/>
            <person name="Nierman W.C."/>
            <person name="Salzberg S.L."/>
            <person name="White O."/>
            <person name="Venter J.C."/>
            <person name="Fraser C.M."/>
            <person name="Kaneko T."/>
            <person name="Nakamura Y."/>
            <person name="Sato S."/>
            <person name="Kato T."/>
            <person name="Asamizu E."/>
            <person name="Sasamoto S."/>
            <person name="Kimura T."/>
            <person name="Idesawa K."/>
            <person name="Kawashima K."/>
            <person name="Kishida Y."/>
            <person name="Kiyokawa C."/>
            <person name="Kohara M."/>
            <person name="Matsumoto M."/>
            <person name="Matsuno A."/>
            <person name="Muraki A."/>
            <person name="Nakayama S."/>
            <person name="Nakazaki N."/>
            <person name="Shinpo S."/>
            <person name="Takeuchi C."/>
            <person name="Wada T."/>
            <person name="Watanabe A."/>
            <person name="Yamada M."/>
            <person name="Yasuda M."/>
            <person name="Tabata S."/>
        </authorList>
    </citation>
    <scope>NUCLEOTIDE SEQUENCE [LARGE SCALE GENOMIC DNA] (AT3G10090)</scope>
    <source>
        <strain>cv. Columbia</strain>
    </source>
</reference>
<reference key="2">
    <citation type="journal article" date="1997" name="DNA Res.">
        <title>Structural analysis of Arabidopsis thaliana chromosome 5. I. Sequence features of the 1.6 Mb regions covered by twenty physically assigned P1 clones.</title>
        <authorList>
            <person name="Sato S."/>
            <person name="Kotani H."/>
            <person name="Nakamura Y."/>
            <person name="Kaneko T."/>
            <person name="Asamizu E."/>
            <person name="Fukami M."/>
            <person name="Miyajima N."/>
            <person name="Tabata S."/>
        </authorList>
    </citation>
    <scope>NUCLEOTIDE SEQUENCE [LARGE SCALE GENOMIC DNA] (AT5G03850)</scope>
    <source>
        <strain>cv. Columbia</strain>
    </source>
</reference>
<reference key="3">
    <citation type="journal article" date="2000" name="Nature">
        <title>Sequence and analysis of chromosome 5 of the plant Arabidopsis thaliana.</title>
        <authorList>
            <person name="Tabata S."/>
            <person name="Kaneko T."/>
            <person name="Nakamura Y."/>
            <person name="Kotani H."/>
            <person name="Kato T."/>
            <person name="Asamizu E."/>
            <person name="Miyajima N."/>
            <person name="Sasamoto S."/>
            <person name="Kimura T."/>
            <person name="Hosouchi T."/>
            <person name="Kawashima K."/>
            <person name="Kohara M."/>
            <person name="Matsumoto M."/>
            <person name="Matsuno A."/>
            <person name="Muraki A."/>
            <person name="Nakayama S."/>
            <person name="Nakazaki N."/>
            <person name="Naruo K."/>
            <person name="Okumura S."/>
            <person name="Shinpo S."/>
            <person name="Takeuchi C."/>
            <person name="Wada T."/>
            <person name="Watanabe A."/>
            <person name="Yamada M."/>
            <person name="Yasuda M."/>
            <person name="Sato S."/>
            <person name="de la Bastide M."/>
            <person name="Huang E."/>
            <person name="Spiegel L."/>
            <person name="Gnoj L."/>
            <person name="O'Shaughnessy A."/>
            <person name="Preston R."/>
            <person name="Habermann K."/>
            <person name="Murray J."/>
            <person name="Johnson D."/>
            <person name="Rohlfing T."/>
            <person name="Nelson J."/>
            <person name="Stoneking T."/>
            <person name="Pepin K."/>
            <person name="Spieth J."/>
            <person name="Sekhon M."/>
            <person name="Armstrong J."/>
            <person name="Becker M."/>
            <person name="Belter E."/>
            <person name="Cordum H."/>
            <person name="Cordes M."/>
            <person name="Courtney L."/>
            <person name="Courtney W."/>
            <person name="Dante M."/>
            <person name="Du H."/>
            <person name="Edwards J."/>
            <person name="Fryman J."/>
            <person name="Haakensen B."/>
            <person name="Lamar E."/>
            <person name="Latreille P."/>
            <person name="Leonard S."/>
            <person name="Meyer R."/>
            <person name="Mulvaney E."/>
            <person name="Ozersky P."/>
            <person name="Riley A."/>
            <person name="Strowmatt C."/>
            <person name="Wagner-McPherson C."/>
            <person name="Wollam A."/>
            <person name="Yoakum M."/>
            <person name="Bell M."/>
            <person name="Dedhia N."/>
            <person name="Parnell L."/>
            <person name="Shah R."/>
            <person name="Rodriguez M."/>
            <person name="Hoon See L."/>
            <person name="Vil D."/>
            <person name="Baker J."/>
            <person name="Kirchoff K."/>
            <person name="Toth K."/>
            <person name="King L."/>
            <person name="Bahret A."/>
            <person name="Miller B."/>
            <person name="Marra M.A."/>
            <person name="Martienssen R."/>
            <person name="McCombie W.R."/>
            <person name="Wilson R.K."/>
            <person name="Murphy G."/>
            <person name="Bancroft I."/>
            <person name="Volckaert G."/>
            <person name="Wambutt R."/>
            <person name="Duesterhoeft A."/>
            <person name="Stiekema W."/>
            <person name="Pohl T."/>
            <person name="Entian K.-D."/>
            <person name="Terryn N."/>
            <person name="Hartley N."/>
            <person name="Bent E."/>
            <person name="Johnson S."/>
            <person name="Langham S.-A."/>
            <person name="McCullagh B."/>
            <person name="Robben J."/>
            <person name="Grymonprez B."/>
            <person name="Zimmermann W."/>
            <person name="Ramsperger U."/>
            <person name="Wedler H."/>
            <person name="Balke K."/>
            <person name="Wedler E."/>
            <person name="Peters S."/>
            <person name="van Staveren M."/>
            <person name="Dirkse W."/>
            <person name="Mooijman P."/>
            <person name="Klein Lankhorst R."/>
            <person name="Weitzenegger T."/>
            <person name="Bothe G."/>
            <person name="Rose M."/>
            <person name="Hauf J."/>
            <person name="Berneiser S."/>
            <person name="Hempel S."/>
            <person name="Feldpausch M."/>
            <person name="Lamberth S."/>
            <person name="Villarroel R."/>
            <person name="Gielen J."/>
            <person name="Ardiles W."/>
            <person name="Bents O."/>
            <person name="Lemcke K."/>
            <person name="Kolesov G."/>
            <person name="Mayer K.F.X."/>
            <person name="Rudd S."/>
            <person name="Schoof H."/>
            <person name="Schueller C."/>
            <person name="Zaccaria P."/>
            <person name="Mewes H.-W."/>
            <person name="Bevan M."/>
            <person name="Fransz P.F."/>
        </authorList>
    </citation>
    <scope>NUCLEOTIDE SEQUENCE [LARGE SCALE GENOMIC DNA] (AT5G03850)</scope>
    <source>
        <strain>cv. Columbia</strain>
    </source>
</reference>
<reference key="4">
    <citation type="journal article" date="2017" name="Plant J.">
        <title>Araport11: a complete reannotation of the Arabidopsis thaliana reference genome.</title>
        <authorList>
            <person name="Cheng C.Y."/>
            <person name="Krishnakumar V."/>
            <person name="Chan A.P."/>
            <person name="Thibaud-Nissen F."/>
            <person name="Schobel S."/>
            <person name="Town C.D."/>
        </authorList>
    </citation>
    <scope>GENOME REANNOTATION</scope>
    <source>
        <strain>cv. Columbia</strain>
    </source>
</reference>
<reference key="5">
    <citation type="journal article" date="2003" name="Science">
        <title>Empirical analysis of transcriptional activity in the Arabidopsis genome.</title>
        <authorList>
            <person name="Yamada K."/>
            <person name="Lim J."/>
            <person name="Dale J.M."/>
            <person name="Chen H."/>
            <person name="Shinn P."/>
            <person name="Palm C.J."/>
            <person name="Southwick A.M."/>
            <person name="Wu H.C."/>
            <person name="Kim C.J."/>
            <person name="Nguyen M."/>
            <person name="Pham P.K."/>
            <person name="Cheuk R.F."/>
            <person name="Karlin-Newmann G."/>
            <person name="Liu S.X."/>
            <person name="Lam B."/>
            <person name="Sakano H."/>
            <person name="Wu T."/>
            <person name="Yu G."/>
            <person name="Miranda M."/>
            <person name="Quach H.L."/>
            <person name="Tripp M."/>
            <person name="Chang C.H."/>
            <person name="Lee J.M."/>
            <person name="Toriumi M.J."/>
            <person name="Chan M.M."/>
            <person name="Tang C.C."/>
            <person name="Onodera C.S."/>
            <person name="Deng J.M."/>
            <person name="Akiyama K."/>
            <person name="Ansari Y."/>
            <person name="Arakawa T."/>
            <person name="Banh J."/>
            <person name="Banno F."/>
            <person name="Bowser L."/>
            <person name="Brooks S.Y."/>
            <person name="Carninci P."/>
            <person name="Chao Q."/>
            <person name="Choy N."/>
            <person name="Enju A."/>
            <person name="Goldsmith A.D."/>
            <person name="Gurjal M."/>
            <person name="Hansen N.F."/>
            <person name="Hayashizaki Y."/>
            <person name="Johnson-Hopson C."/>
            <person name="Hsuan V.W."/>
            <person name="Iida K."/>
            <person name="Karnes M."/>
            <person name="Khan S."/>
            <person name="Koesema E."/>
            <person name="Ishida J."/>
            <person name="Jiang P.X."/>
            <person name="Jones T."/>
            <person name="Kawai J."/>
            <person name="Kamiya A."/>
            <person name="Meyers C."/>
            <person name="Nakajima M."/>
            <person name="Narusaka M."/>
            <person name="Seki M."/>
            <person name="Sakurai T."/>
            <person name="Satou M."/>
            <person name="Tamse R."/>
            <person name="Vaysberg M."/>
            <person name="Wallender E.K."/>
            <person name="Wong C."/>
            <person name="Yamamura Y."/>
            <person name="Yuan S."/>
            <person name="Shinozaki K."/>
            <person name="Davis R.W."/>
            <person name="Theologis A."/>
            <person name="Ecker J.R."/>
        </authorList>
    </citation>
    <scope>NUCLEOTIDE SEQUENCE [LARGE SCALE MRNA] (AT5G03850)</scope>
    <source>
        <strain>cv. Columbia</strain>
    </source>
</reference>
<reference key="6">
    <citation type="submission" date="2006-06" db="EMBL/GenBank/DDBJ databases">
        <title>Arabidopsis ORF clones.</title>
        <authorList>
            <person name="Cheuk R.F."/>
            <person name="Chen H."/>
            <person name="Kim C.J."/>
            <person name="Shinn P."/>
            <person name="Ecker J.R."/>
        </authorList>
    </citation>
    <scope>NUCLEOTIDE SEQUENCE [LARGE SCALE MRNA] (AT3G10090 AND AT5G03850)</scope>
    <source>
        <strain>cv. Columbia</strain>
    </source>
</reference>
<reference key="7">
    <citation type="journal article" date="2001" name="Plant Physiol.">
        <title>The organization of cytoplasmic ribosomal protein genes in the Arabidopsis genome.</title>
        <authorList>
            <person name="Barakat A."/>
            <person name="Szick-Miranda K."/>
            <person name="Chang I.-F."/>
            <person name="Guyot R."/>
            <person name="Blanc G."/>
            <person name="Cooke R."/>
            <person name="Delseny M."/>
            <person name="Bailey-Serres J."/>
        </authorList>
    </citation>
    <scope>GENE FAMILY ORGANIZATION</scope>
    <scope>NOMENCLATURE</scope>
</reference>
<reference key="8">
    <citation type="journal article" date="2023" name="Plant Cell">
        <title>An updated nomenclature for plant ribosomal protein genes.</title>
        <authorList>
            <person name="Scarpin M.R."/>
            <person name="Busche M."/>
            <person name="Martinez R.E."/>
            <person name="Harper L.C."/>
            <person name="Reiser L."/>
            <person name="Szakonyi D."/>
            <person name="Merchante C."/>
            <person name="Lan T."/>
            <person name="Xiong W."/>
            <person name="Mo B."/>
            <person name="Tang G."/>
            <person name="Chen X."/>
            <person name="Bailey-Serres J."/>
            <person name="Browning K.S."/>
            <person name="Brunkard J.O."/>
        </authorList>
    </citation>
    <scope>NOMENCLATURE</scope>
</reference>
<feature type="chain" id="PRO_0000250538" description="Small ribosomal subunit protein eS28z/eS28y">
    <location>
        <begin position="1"/>
        <end position="64"/>
    </location>
</feature>
<proteinExistence type="inferred from homology"/>
<evidence type="ECO:0000303" key="1">
    <source>
    </source>
</evidence>
<evidence type="ECO:0000305" key="2"/>
<protein>
    <recommendedName>
        <fullName evidence="1">Small ribosomal subunit protein eS28z/eS28y</fullName>
    </recommendedName>
    <alternativeName>
        <fullName>40S ribosomal protein S28-1</fullName>
    </alternativeName>
</protein>
<dbReference type="EMBL" id="AC010927">
    <property type="protein sequence ID" value="AAF04415.1"/>
    <property type="molecule type" value="Genomic_DNA"/>
</dbReference>
<dbReference type="EMBL" id="AB005235">
    <property type="protein sequence ID" value="BAB08611.1"/>
    <property type="molecule type" value="Genomic_DNA"/>
</dbReference>
<dbReference type="EMBL" id="AL162873">
    <property type="protein sequence ID" value="CAB85505.1"/>
    <property type="molecule type" value="Genomic_DNA"/>
</dbReference>
<dbReference type="EMBL" id="CP002686">
    <property type="protein sequence ID" value="AEE74858.1"/>
    <property type="molecule type" value="Genomic_DNA"/>
</dbReference>
<dbReference type="EMBL" id="CP002688">
    <property type="protein sequence ID" value="AED90662.1"/>
    <property type="molecule type" value="Genomic_DNA"/>
</dbReference>
<dbReference type="EMBL" id="AY128400">
    <property type="protein sequence ID" value="AAM91603.1"/>
    <property type="molecule type" value="mRNA"/>
</dbReference>
<dbReference type="EMBL" id="BT000086">
    <property type="protein sequence ID" value="AAN15405.1"/>
    <property type="molecule type" value="mRNA"/>
</dbReference>
<dbReference type="EMBL" id="BT010782">
    <property type="protein sequence ID" value="AAR24149.1"/>
    <property type="molecule type" value="mRNA"/>
</dbReference>
<dbReference type="EMBL" id="BT011253">
    <property type="protein sequence ID" value="AAR92289.1"/>
    <property type="molecule type" value="mRNA"/>
</dbReference>
<dbReference type="EMBL" id="BT025696">
    <property type="protein sequence ID" value="ABF82599.1"/>
    <property type="molecule type" value="mRNA"/>
</dbReference>
<dbReference type="PIR" id="T48412">
    <property type="entry name" value="T48412"/>
</dbReference>
<dbReference type="RefSeq" id="NP_187620.1">
    <property type="nucleotide sequence ID" value="NM_111844.5"/>
</dbReference>
<dbReference type="RefSeq" id="NP_196005.1">
    <property type="nucleotide sequence ID" value="NM_120466.3"/>
</dbReference>
<dbReference type="SMR" id="Q9SR73"/>
<dbReference type="BioGRID" id="16968">
    <property type="interactions" value="2"/>
</dbReference>
<dbReference type="FunCoup" id="Q9SR73">
    <property type="interactions" value="2824"/>
</dbReference>
<dbReference type="IntAct" id="Q9SR73">
    <property type="interactions" value="1"/>
</dbReference>
<dbReference type="STRING" id="3702.Q9SR73"/>
<dbReference type="iPTMnet" id="Q9SR73"/>
<dbReference type="PaxDb" id="3702-AT3G10090.1"/>
<dbReference type="ProteomicsDB" id="237022"/>
<dbReference type="DNASU" id="820170"/>
<dbReference type="EnsemblPlants" id="AT3G10090.1">
    <property type="protein sequence ID" value="AT3G10090.1"/>
    <property type="gene ID" value="AT3G10090"/>
</dbReference>
<dbReference type="EnsemblPlants" id="AT5G03850.1">
    <property type="protein sequence ID" value="AT5G03850.1"/>
    <property type="gene ID" value="AT5G03850"/>
</dbReference>
<dbReference type="GeneID" id="820170"/>
<dbReference type="GeneID" id="831692"/>
<dbReference type="Gramene" id="AT3G10090.1">
    <property type="protein sequence ID" value="AT3G10090.1"/>
    <property type="gene ID" value="AT3G10090"/>
</dbReference>
<dbReference type="Gramene" id="AT5G03850.1">
    <property type="protein sequence ID" value="AT5G03850.1"/>
    <property type="gene ID" value="AT5G03850"/>
</dbReference>
<dbReference type="KEGG" id="ath:AT3G10090"/>
<dbReference type="KEGG" id="ath:AT5G03850"/>
<dbReference type="Araport" id="AT3G10090"/>
<dbReference type="Araport" id="AT5G03850"/>
<dbReference type="TAIR" id="AT3G10090"/>
<dbReference type="TAIR" id="AT5G03850"/>
<dbReference type="eggNOG" id="KOG3502">
    <property type="taxonomic scope" value="Eukaryota"/>
</dbReference>
<dbReference type="HOGENOM" id="CLU_178987_1_0_1"/>
<dbReference type="InParanoid" id="Q9SR73"/>
<dbReference type="OMA" id="NTGMHGE"/>
<dbReference type="OrthoDB" id="1642935at2759"/>
<dbReference type="PhylomeDB" id="Q9SR73"/>
<dbReference type="CD-CODE" id="4299E36E">
    <property type="entry name" value="Nucleolus"/>
</dbReference>
<dbReference type="PRO" id="PR:Q9SR73"/>
<dbReference type="Proteomes" id="UP000006548">
    <property type="component" value="Chromosome 3"/>
</dbReference>
<dbReference type="Proteomes" id="UP000006548">
    <property type="component" value="Chromosome 5"/>
</dbReference>
<dbReference type="ExpressionAtlas" id="Q9SR73">
    <property type="expression patterns" value="baseline and differential"/>
</dbReference>
<dbReference type="GO" id="GO:0005829">
    <property type="term" value="C:cytosol"/>
    <property type="evidence" value="ECO:0007005"/>
    <property type="project" value="TAIR"/>
</dbReference>
<dbReference type="GO" id="GO:0022626">
    <property type="term" value="C:cytosolic ribosome"/>
    <property type="evidence" value="ECO:0007005"/>
    <property type="project" value="TAIR"/>
</dbReference>
<dbReference type="GO" id="GO:0022627">
    <property type="term" value="C:cytosolic small ribosomal subunit"/>
    <property type="evidence" value="ECO:0007005"/>
    <property type="project" value="TAIR"/>
</dbReference>
<dbReference type="GO" id="GO:0009505">
    <property type="term" value="C:plant-type cell wall"/>
    <property type="evidence" value="ECO:0007005"/>
    <property type="project" value="TAIR"/>
</dbReference>
<dbReference type="GO" id="GO:0005886">
    <property type="term" value="C:plasma membrane"/>
    <property type="evidence" value="ECO:0007005"/>
    <property type="project" value="TAIR"/>
</dbReference>
<dbReference type="GO" id="GO:0003729">
    <property type="term" value="F:mRNA binding"/>
    <property type="evidence" value="ECO:0000314"/>
    <property type="project" value="TAIR"/>
</dbReference>
<dbReference type="GO" id="GO:0003735">
    <property type="term" value="F:structural constituent of ribosome"/>
    <property type="evidence" value="ECO:0000314"/>
    <property type="project" value="CAFA"/>
</dbReference>
<dbReference type="GO" id="GO:0006412">
    <property type="term" value="P:translation"/>
    <property type="evidence" value="ECO:0007669"/>
    <property type="project" value="InterPro"/>
</dbReference>
<dbReference type="CDD" id="cd04457">
    <property type="entry name" value="S1_S28E"/>
    <property type="match status" value="1"/>
</dbReference>
<dbReference type="FunFam" id="2.40.50.140:FF:000025">
    <property type="entry name" value="40S ribosomal protein S28"/>
    <property type="match status" value="1"/>
</dbReference>
<dbReference type="Gene3D" id="2.40.50.140">
    <property type="entry name" value="Nucleic acid-binding proteins"/>
    <property type="match status" value="1"/>
</dbReference>
<dbReference type="HAMAP" id="MF_00292">
    <property type="entry name" value="Ribosomal_eS28"/>
    <property type="match status" value="1"/>
</dbReference>
<dbReference type="InterPro" id="IPR012340">
    <property type="entry name" value="NA-bd_OB-fold"/>
</dbReference>
<dbReference type="InterPro" id="IPR000289">
    <property type="entry name" value="Ribosomal_eS28"/>
</dbReference>
<dbReference type="InterPro" id="IPR028626">
    <property type="entry name" value="Ribosomal_eS28_CS"/>
</dbReference>
<dbReference type="PANTHER" id="PTHR10769">
    <property type="entry name" value="40S RIBOSOMAL PROTEIN S28"/>
    <property type="match status" value="1"/>
</dbReference>
<dbReference type="PANTHER" id="PTHR10769:SF6">
    <property type="entry name" value="SMALL RIBOSOMAL SUBUNIT PROTEIN ES28Z_ES28Y"/>
    <property type="match status" value="1"/>
</dbReference>
<dbReference type="Pfam" id="PF01200">
    <property type="entry name" value="Ribosomal_S28e"/>
    <property type="match status" value="1"/>
</dbReference>
<dbReference type="SUPFAM" id="SSF50249">
    <property type="entry name" value="Nucleic acid-binding proteins"/>
    <property type="match status" value="1"/>
</dbReference>
<dbReference type="PROSITE" id="PS00961">
    <property type="entry name" value="RIBOSOMAL_S28E"/>
    <property type="match status" value="1"/>
</dbReference>
<name>RS281_ARATH</name>